<dbReference type="EMBL" id="AF026400">
    <property type="protein sequence ID" value="AAB81994.1"/>
    <property type="molecule type" value="mRNA"/>
</dbReference>
<dbReference type="SMR" id="O22591"/>
<dbReference type="GO" id="GO:0009535">
    <property type="term" value="C:chloroplast thylakoid membrane"/>
    <property type="evidence" value="ECO:0007669"/>
    <property type="project" value="UniProtKB-SubCell"/>
</dbReference>
<dbReference type="GO" id="GO:0019898">
    <property type="term" value="C:extrinsic component of membrane"/>
    <property type="evidence" value="ECO:0007669"/>
    <property type="project" value="InterPro"/>
</dbReference>
<dbReference type="GO" id="GO:0009654">
    <property type="term" value="C:photosystem II oxygen evolving complex"/>
    <property type="evidence" value="ECO:0007669"/>
    <property type="project" value="InterPro"/>
</dbReference>
<dbReference type="GO" id="GO:0005509">
    <property type="term" value="F:calcium ion binding"/>
    <property type="evidence" value="ECO:0007669"/>
    <property type="project" value="InterPro"/>
</dbReference>
<dbReference type="GO" id="GO:0045156">
    <property type="term" value="F:electron transporter, transferring electrons within the cyclic electron transport pathway of photosynthesis activity"/>
    <property type="evidence" value="ECO:0007669"/>
    <property type="project" value="TreeGrafter"/>
</dbReference>
<dbReference type="GO" id="GO:0009767">
    <property type="term" value="P:photosynthetic electron transport chain"/>
    <property type="evidence" value="ECO:0007669"/>
    <property type="project" value="TreeGrafter"/>
</dbReference>
<dbReference type="FunFam" id="1.20.120.290:FF:000001">
    <property type="entry name" value="Oxygen-evolving enhancer protein 3"/>
    <property type="match status" value="1"/>
</dbReference>
<dbReference type="Gene3D" id="1.20.120.290">
    <property type="entry name" value="Oxygen-evolving enhancer protein 3 (PsbQ), four-helix up-down bundle"/>
    <property type="match status" value="1"/>
</dbReference>
<dbReference type="InterPro" id="IPR023222">
    <property type="entry name" value="PsbQ-like_dom_sf"/>
</dbReference>
<dbReference type="InterPro" id="IPR008797">
    <property type="entry name" value="PSII_PsbQ"/>
</dbReference>
<dbReference type="InterPro" id="IPR054099">
    <property type="entry name" value="PSII_PsbQ_pln"/>
</dbReference>
<dbReference type="PANTHER" id="PTHR33399">
    <property type="entry name" value="OXYGEN-EVOLVING ENHANCER PROTEIN 3-1, CHLOROPLASTIC"/>
    <property type="match status" value="1"/>
</dbReference>
<dbReference type="PANTHER" id="PTHR33399:SF3">
    <property type="entry name" value="OXYGEN-EVOLVING ENHANCER PROTEIN 3-1, CHLOROPLASTIC"/>
    <property type="match status" value="1"/>
</dbReference>
<dbReference type="Pfam" id="PF05757">
    <property type="entry name" value="PsbQ"/>
    <property type="match status" value="1"/>
</dbReference>
<dbReference type="SUPFAM" id="SSF101112">
    <property type="entry name" value="Oxygen-evolving enhancer protein 3"/>
    <property type="match status" value="1"/>
</dbReference>
<keyword id="KW-0150">Chloroplast</keyword>
<keyword id="KW-0472">Membrane</keyword>
<keyword id="KW-0602">Photosynthesis</keyword>
<keyword id="KW-0604">Photosystem II</keyword>
<keyword id="KW-0934">Plastid</keyword>
<keyword id="KW-0793">Thylakoid</keyword>
<keyword id="KW-0809">Transit peptide</keyword>
<feature type="transit peptide" description="Chloroplast" evidence="1">
    <location>
        <begin position="1"/>
        <end position="82"/>
    </location>
</feature>
<feature type="chain" id="PRO_0000029594" description="Oxygen-evolving enhancer protein 3, chloroplastic">
    <location>
        <begin position="83"/>
        <end position="231"/>
    </location>
</feature>
<feature type="region of interest" description="Disordered" evidence="2">
    <location>
        <begin position="15"/>
        <end position="57"/>
    </location>
</feature>
<feature type="compositionally biased region" description="Low complexity" evidence="2">
    <location>
        <begin position="18"/>
        <end position="30"/>
    </location>
</feature>
<feature type="compositionally biased region" description="Polar residues" evidence="2">
    <location>
        <begin position="48"/>
        <end position="57"/>
    </location>
</feature>
<name>PSBQ_ONOVI</name>
<organism>
    <name type="scientific">Onobrychis viciifolia</name>
    <name type="common">Common sainfoin</name>
    <dbReference type="NCBI Taxonomy" id="3882"/>
    <lineage>
        <taxon>Eukaryota</taxon>
        <taxon>Viridiplantae</taxon>
        <taxon>Streptophyta</taxon>
        <taxon>Embryophyta</taxon>
        <taxon>Tracheophyta</taxon>
        <taxon>Spermatophyta</taxon>
        <taxon>Magnoliopsida</taxon>
        <taxon>eudicotyledons</taxon>
        <taxon>Gunneridae</taxon>
        <taxon>Pentapetalae</taxon>
        <taxon>rosids</taxon>
        <taxon>fabids</taxon>
        <taxon>Fabales</taxon>
        <taxon>Fabaceae</taxon>
        <taxon>Papilionoideae</taxon>
        <taxon>50 kb inversion clade</taxon>
        <taxon>NPAAA clade</taxon>
        <taxon>Hologalegina</taxon>
        <taxon>IRL clade</taxon>
        <taxon>Hedysareae</taxon>
        <taxon>Onobrychis</taxon>
    </lineage>
</organism>
<comment type="subcellular location">
    <subcellularLocation>
        <location>Plastid</location>
        <location>Chloroplast thylakoid membrane</location>
    </subcellularLocation>
    <text>Associated with the photosystem II complex.</text>
</comment>
<comment type="similarity">
    <text evidence="3">Belongs to the PsbQ family.</text>
</comment>
<sequence>MAQAMASGLLEGSLQLMSGSNRSSSSSRTRGPAGVFIVRAQQQEQQQGMSSSAADPQSNRRAMLGLVATGLASASFVQAVLAEAKPIKVGGPPPPSGGLGGTLNSDEARDLKLPLKERFYIQPLSPTEAAQRQRESAKEIVAVKKFIDQKLGHMFINDLRLRASYLRYDLNTVISSKPKEQKQSLKESSAGKLFQDIDNLDYAAKLKSAPQAEKYYADAVSTLNDVLSKIG</sequence>
<evidence type="ECO:0000250" key="1"/>
<evidence type="ECO:0000256" key="2">
    <source>
        <dbReference type="SAM" id="MobiDB-lite"/>
    </source>
</evidence>
<evidence type="ECO:0000305" key="3"/>
<proteinExistence type="evidence at transcript level"/>
<reference key="1">
    <citation type="submission" date="1997-09" db="EMBL/GenBank/DDBJ databases">
        <title>cDNA encoding oxygen-evolving enhancer protein 3 precursor from Onobrychis viciifolia.</title>
        <authorList>
            <person name="Joseph R.G."/>
        </authorList>
    </citation>
    <scope>NUCLEOTIDE SEQUENCE [MRNA]</scope>
</reference>
<gene>
    <name type="primary">PSBQ</name>
</gene>
<accession>O22591</accession>
<protein>
    <recommendedName>
        <fullName>Oxygen-evolving enhancer protein 3, chloroplastic</fullName>
        <shortName>OEE3</shortName>
    </recommendedName>
    <alternativeName>
        <fullName>16 kDa subunit of oxygen evolving system of photosystem II</fullName>
    </alternativeName>
    <alternativeName>
        <fullName>OEC 16 kDa subunit</fullName>
    </alternativeName>
</protein>